<name>PG030_VAR67</name>
<sequence length="134" mass="16068">MDTYMNRLDLDKLKHENIFSGNIIEDAKEFVFGSRKIYTDSVNDLIELYNLAKYLNNEKLKDVVIERMDYVCKYIIGKDNWYTIYSFYKENGLRNSFLRQYINNNIEEIRNTDQFLKFDVDSVCDILNNDETIV</sequence>
<proteinExistence type="inferred from homology"/>
<gene>
    <name type="primary">OPG30</name>
    <name type="synonym">D10L</name>
    <name type="synonym">D13L</name>
</gene>
<organism>
    <name type="scientific">Variola virus (isolate Human/India/Ind3/1967)</name>
    <name type="common">VARV</name>
    <name type="synonym">Smallpox virus</name>
    <dbReference type="NCBI Taxonomy" id="587200"/>
    <lineage>
        <taxon>Viruses</taxon>
        <taxon>Varidnaviria</taxon>
        <taxon>Bamfordvirae</taxon>
        <taxon>Nucleocytoviricota</taxon>
        <taxon>Pokkesviricetes</taxon>
        <taxon>Chitovirales</taxon>
        <taxon>Poxviridae</taxon>
        <taxon>Chordopoxvirinae</taxon>
        <taxon>Orthopoxvirus</taxon>
        <taxon>Variola virus</taxon>
    </lineage>
</organism>
<evidence type="ECO:0000250" key="1">
    <source>
        <dbReference type="UniProtKB" id="P17367"/>
    </source>
</evidence>
<evidence type="ECO:0000305" key="2"/>
<organismHost>
    <name type="scientific">Homo sapiens</name>
    <name type="common">Human</name>
    <dbReference type="NCBI Taxonomy" id="9606"/>
</organismHost>
<keyword id="KW-0244">Early protein</keyword>
<keyword id="KW-1185">Reference proteome</keyword>
<accession>P0DOR2</accession>
<accession>P34013</accession>
<feature type="chain" id="PRO_0000099382" description="Protein OPG030">
    <location>
        <begin position="1"/>
        <end position="134"/>
    </location>
</feature>
<feature type="domain" description="BACK">
    <location>
        <begin position="88"/>
        <end position="133"/>
    </location>
</feature>
<dbReference type="EMBL" id="X69198">
    <property type="protein sequence ID" value="CAA48951.1"/>
    <property type="molecule type" value="Genomic_DNA"/>
</dbReference>
<dbReference type="PIR" id="A36838">
    <property type="entry name" value="A36838"/>
</dbReference>
<dbReference type="RefSeq" id="NP_042054.1">
    <property type="nucleotide sequence ID" value="NC_001611.1"/>
</dbReference>
<dbReference type="SMR" id="P0DOR2"/>
<dbReference type="GeneID" id="1486390"/>
<dbReference type="KEGG" id="vg:1486390"/>
<dbReference type="Proteomes" id="UP000002060">
    <property type="component" value="Segment"/>
</dbReference>
<dbReference type="Gene3D" id="1.25.40.420">
    <property type="match status" value="1"/>
</dbReference>
<dbReference type="InterPro" id="IPR009177">
    <property type="entry name" value="Orthopox_C5"/>
</dbReference>
<dbReference type="PIRSF" id="PIRSF003781">
    <property type="entry name" value="VAC_C5L"/>
    <property type="match status" value="1"/>
</dbReference>
<protein>
    <recommendedName>
        <fullName>Protein OPG030</fullName>
    </recommendedName>
</protein>
<reference key="1">
    <citation type="journal article" date="1993" name="FEBS Lett.">
        <title>Genes of variola and vaccinia viruses necessary to overcome the host protective mechanisms.</title>
        <authorList>
            <person name="Shchelkunov S.N."/>
            <person name="Blinov V.M."/>
            <person name="Sandakhchiev L.S."/>
        </authorList>
    </citation>
    <scope>NUCLEOTIDE SEQUENCE [GENOMIC DNA]</scope>
</reference>
<comment type="induction">
    <text evidence="1">Expressed in the early phase of the viral replicative cycle.</text>
</comment>
<comment type="similarity">
    <text evidence="2">Belongs to the orthopoxvirus OPG030 family.</text>
</comment>